<protein>
    <recommendedName>
        <fullName evidence="1">Fe/S biogenesis protein NfuA</fullName>
    </recommendedName>
</protein>
<evidence type="ECO:0000255" key="1">
    <source>
        <dbReference type="HAMAP-Rule" id="MF_01637"/>
    </source>
</evidence>
<keyword id="KW-0004">4Fe-4S</keyword>
<keyword id="KW-0408">Iron</keyword>
<keyword id="KW-0411">Iron-sulfur</keyword>
<keyword id="KW-0479">Metal-binding</keyword>
<gene>
    <name evidence="1" type="primary">nfuA</name>
    <name type="ordered locus">YPTB3773</name>
</gene>
<sequence length="191" mass="21004">MITITDAAQSHFAKLLANQEEGTQIRVFVINPGTPTAECGVSYCPPDAVEATDTELKFEQLSAYVDELSVPYLQDAEIDFVTDQLGSQLTLKAPNAKMRKVDDSAPLMERVEYVLQSQINPQLAGHGGRVTLMEITPEGLAILQFGGGCNGCSMVDVTLKEGIEKELLQKFPELKGVRDLTEHQRGEHSYY</sequence>
<feature type="chain" id="PRO_0000268250" description="Fe/S biogenesis protein NfuA">
    <location>
        <begin position="1"/>
        <end position="191"/>
    </location>
</feature>
<feature type="binding site" evidence="1">
    <location>
        <position position="149"/>
    </location>
    <ligand>
        <name>[4Fe-4S] cluster</name>
        <dbReference type="ChEBI" id="CHEBI:49883"/>
    </ligand>
</feature>
<feature type="binding site" evidence="1">
    <location>
        <position position="152"/>
    </location>
    <ligand>
        <name>[4Fe-4S] cluster</name>
        <dbReference type="ChEBI" id="CHEBI:49883"/>
    </ligand>
</feature>
<dbReference type="EMBL" id="BX936398">
    <property type="protein sequence ID" value="CAH23011.1"/>
    <property type="molecule type" value="Genomic_DNA"/>
</dbReference>
<dbReference type="RefSeq" id="WP_002208924.1">
    <property type="nucleotide sequence ID" value="NZ_CP009712.1"/>
</dbReference>
<dbReference type="SMR" id="Q664J6"/>
<dbReference type="GeneID" id="57974473"/>
<dbReference type="KEGG" id="ypo:BZ17_2812"/>
<dbReference type="KEGG" id="yps:YPTB3773"/>
<dbReference type="PATRIC" id="fig|273123.14.peg.2951"/>
<dbReference type="Proteomes" id="UP000001011">
    <property type="component" value="Chromosome"/>
</dbReference>
<dbReference type="GO" id="GO:0051539">
    <property type="term" value="F:4 iron, 4 sulfur cluster binding"/>
    <property type="evidence" value="ECO:0007669"/>
    <property type="project" value="UniProtKB-UniRule"/>
</dbReference>
<dbReference type="GO" id="GO:0005506">
    <property type="term" value="F:iron ion binding"/>
    <property type="evidence" value="ECO:0007669"/>
    <property type="project" value="InterPro"/>
</dbReference>
<dbReference type="GO" id="GO:0016226">
    <property type="term" value="P:iron-sulfur cluster assembly"/>
    <property type="evidence" value="ECO:0007669"/>
    <property type="project" value="UniProtKB-UniRule"/>
</dbReference>
<dbReference type="GO" id="GO:0051604">
    <property type="term" value="P:protein maturation"/>
    <property type="evidence" value="ECO:0007669"/>
    <property type="project" value="UniProtKB-UniRule"/>
</dbReference>
<dbReference type="Gene3D" id="3.30.300.130">
    <property type="entry name" value="Fe-S cluster assembly (FSCA)"/>
    <property type="match status" value="1"/>
</dbReference>
<dbReference type="Gene3D" id="2.60.300.12">
    <property type="entry name" value="HesB-like domain"/>
    <property type="match status" value="1"/>
</dbReference>
<dbReference type="HAMAP" id="MF_01637">
    <property type="entry name" value="Fe_S_biogen_NfuA"/>
    <property type="match status" value="1"/>
</dbReference>
<dbReference type="InterPro" id="IPR017726">
    <property type="entry name" value="Fe/S_biogenesis_protein_NfuA"/>
</dbReference>
<dbReference type="InterPro" id="IPR000361">
    <property type="entry name" value="FeS_biogenesis"/>
</dbReference>
<dbReference type="InterPro" id="IPR034904">
    <property type="entry name" value="FSCA_dom_sf"/>
</dbReference>
<dbReference type="InterPro" id="IPR035903">
    <property type="entry name" value="HesB-like_dom_sf"/>
</dbReference>
<dbReference type="InterPro" id="IPR001075">
    <property type="entry name" value="NIF_FeS_clus_asmbl_NifU_C"/>
</dbReference>
<dbReference type="NCBIfam" id="NF008392">
    <property type="entry name" value="PRK11190.1"/>
    <property type="match status" value="1"/>
</dbReference>
<dbReference type="NCBIfam" id="TIGR03341">
    <property type="entry name" value="YhgI_GntY"/>
    <property type="match status" value="1"/>
</dbReference>
<dbReference type="PANTHER" id="PTHR11178:SF51">
    <property type="entry name" value="FE_S BIOGENESIS PROTEIN NFUA"/>
    <property type="match status" value="1"/>
</dbReference>
<dbReference type="PANTHER" id="PTHR11178">
    <property type="entry name" value="IRON-SULFUR CLUSTER SCAFFOLD PROTEIN NFU-RELATED"/>
    <property type="match status" value="1"/>
</dbReference>
<dbReference type="Pfam" id="PF01521">
    <property type="entry name" value="Fe-S_biosyn"/>
    <property type="match status" value="1"/>
</dbReference>
<dbReference type="Pfam" id="PF01106">
    <property type="entry name" value="NifU"/>
    <property type="match status" value="1"/>
</dbReference>
<dbReference type="SUPFAM" id="SSF117916">
    <property type="entry name" value="Fe-S cluster assembly (FSCA) domain-like"/>
    <property type="match status" value="1"/>
</dbReference>
<dbReference type="SUPFAM" id="SSF89360">
    <property type="entry name" value="HesB-like domain"/>
    <property type="match status" value="1"/>
</dbReference>
<comment type="function">
    <text evidence="1">Involved in iron-sulfur cluster biogenesis. Binds a 4Fe-4S cluster, can transfer this cluster to apoproteins, and thereby intervenes in the maturation of Fe/S proteins. Could also act as a scaffold/chaperone for damaged Fe/S proteins.</text>
</comment>
<comment type="cofactor">
    <cofactor evidence="1">
        <name>[4Fe-4S] cluster</name>
        <dbReference type="ChEBI" id="CHEBI:49883"/>
    </cofactor>
    <text evidence="1">Binds 1 [4Fe-4S] cluster per subunit. The cluster is presumably bound at the interface of two monomers.</text>
</comment>
<comment type="subunit">
    <text evidence="1">Homodimer.</text>
</comment>
<comment type="similarity">
    <text evidence="1">Belongs to the NfuA family.</text>
</comment>
<accession>Q664J6</accession>
<proteinExistence type="inferred from homology"/>
<organism>
    <name type="scientific">Yersinia pseudotuberculosis serotype I (strain IP32953)</name>
    <dbReference type="NCBI Taxonomy" id="273123"/>
    <lineage>
        <taxon>Bacteria</taxon>
        <taxon>Pseudomonadati</taxon>
        <taxon>Pseudomonadota</taxon>
        <taxon>Gammaproteobacteria</taxon>
        <taxon>Enterobacterales</taxon>
        <taxon>Yersiniaceae</taxon>
        <taxon>Yersinia</taxon>
    </lineage>
</organism>
<reference key="1">
    <citation type="journal article" date="2004" name="Proc. Natl. Acad. Sci. U.S.A.">
        <title>Insights into the evolution of Yersinia pestis through whole-genome comparison with Yersinia pseudotuberculosis.</title>
        <authorList>
            <person name="Chain P.S.G."/>
            <person name="Carniel E."/>
            <person name="Larimer F.W."/>
            <person name="Lamerdin J."/>
            <person name="Stoutland P.O."/>
            <person name="Regala W.M."/>
            <person name="Georgescu A.M."/>
            <person name="Vergez L.M."/>
            <person name="Land M.L."/>
            <person name="Motin V.L."/>
            <person name="Brubaker R.R."/>
            <person name="Fowler J."/>
            <person name="Hinnebusch J."/>
            <person name="Marceau M."/>
            <person name="Medigue C."/>
            <person name="Simonet M."/>
            <person name="Chenal-Francisque V."/>
            <person name="Souza B."/>
            <person name="Dacheux D."/>
            <person name="Elliott J.M."/>
            <person name="Derbise A."/>
            <person name="Hauser L.J."/>
            <person name="Garcia E."/>
        </authorList>
    </citation>
    <scope>NUCLEOTIDE SEQUENCE [LARGE SCALE GENOMIC DNA]</scope>
    <source>
        <strain>IP32953</strain>
    </source>
</reference>
<name>NFUA_YERPS</name>